<proteinExistence type="evidence at protein level"/>
<organism>
    <name type="scientific">Homo sapiens</name>
    <name type="common">Human</name>
    <dbReference type="NCBI Taxonomy" id="9606"/>
    <lineage>
        <taxon>Eukaryota</taxon>
        <taxon>Metazoa</taxon>
        <taxon>Chordata</taxon>
        <taxon>Craniata</taxon>
        <taxon>Vertebrata</taxon>
        <taxon>Euteleostomi</taxon>
        <taxon>Mammalia</taxon>
        <taxon>Eutheria</taxon>
        <taxon>Euarchontoglires</taxon>
        <taxon>Primates</taxon>
        <taxon>Haplorrhini</taxon>
        <taxon>Catarrhini</taxon>
        <taxon>Hominidae</taxon>
        <taxon>Homo</taxon>
    </lineage>
</organism>
<dbReference type="EMBL" id="AY358517">
    <property type="protein sequence ID" value="AAQ88881.1"/>
    <property type="molecule type" value="mRNA"/>
</dbReference>
<dbReference type="EMBL" id="AC079779">
    <property type="status" value="NOT_ANNOTATED_CDS"/>
    <property type="molecule type" value="Genomic_DNA"/>
</dbReference>
<dbReference type="CCDS" id="CCDS46218.1">
    <molecule id="Q6UX46-1"/>
</dbReference>
<dbReference type="RefSeq" id="NP_001002919.2">
    <molecule id="Q6UX46-1"/>
    <property type="nucleotide sequence ID" value="NM_001002919.3"/>
</dbReference>
<dbReference type="RefSeq" id="XP_005264746.1">
    <property type="nucleotide sequence ID" value="XM_005264689.4"/>
</dbReference>
<dbReference type="PDB" id="7LS0">
    <property type="method" value="X-ray"/>
    <property type="resolution" value="3.05 A"/>
    <property type="chains" value="A/B/C/D=85-152"/>
</dbReference>
<dbReference type="PDB" id="7MZX">
    <property type="method" value="NMR"/>
    <property type="chains" value="A=77-152"/>
</dbReference>
<dbReference type="PDB" id="7N00">
    <property type="method" value="EM"/>
    <property type="resolution" value="2.27 A"/>
    <property type="chains" value="B/D=25-152"/>
</dbReference>
<dbReference type="PDB" id="7NWZ">
    <property type="method" value="X-ray"/>
    <property type="resolution" value="4.17 A"/>
    <property type="chains" value="C/D=78-152"/>
</dbReference>
<dbReference type="PDB" id="9G5I">
    <property type="method" value="EM"/>
    <property type="resolution" value="3.20 A"/>
    <property type="chains" value="C=25-152"/>
</dbReference>
<dbReference type="PDBsum" id="7LS0"/>
<dbReference type="PDBsum" id="7MZX"/>
<dbReference type="PDBsum" id="7N00"/>
<dbReference type="PDBsum" id="7NWZ"/>
<dbReference type="PDBsum" id="9G5I"/>
<dbReference type="EMDB" id="EMD-24095"/>
<dbReference type="EMDB" id="EMD-51087"/>
<dbReference type="SMR" id="Q6UX46"/>
<dbReference type="BioGRID" id="129997">
    <property type="interactions" value="208"/>
</dbReference>
<dbReference type="FunCoup" id="Q6UX46">
    <property type="interactions" value="327"/>
</dbReference>
<dbReference type="IntAct" id="Q6UX46">
    <property type="interactions" value="11"/>
</dbReference>
<dbReference type="STRING" id="9606.ENSP00000384604"/>
<dbReference type="BioMuta" id="ALKAL2"/>
<dbReference type="DMDM" id="229462850"/>
<dbReference type="MassIVE" id="Q6UX46"/>
<dbReference type="PaxDb" id="9606-ENSP00000384604"/>
<dbReference type="PeptideAtlas" id="Q6UX46"/>
<dbReference type="ProteomicsDB" id="67564">
    <molecule id="Q6UX46-1"/>
</dbReference>
<dbReference type="Antibodypedia" id="62864">
    <property type="antibodies" value="1 antibodies from 1 providers"/>
</dbReference>
<dbReference type="DNASU" id="285016"/>
<dbReference type="Ensembl" id="ENST00000403610.9">
    <molecule id="Q6UX46-1"/>
    <property type="protein sequence ID" value="ENSP00000384604.3"/>
    <property type="gene ID" value="ENSG00000189292.17"/>
</dbReference>
<dbReference type="GeneID" id="285016"/>
<dbReference type="KEGG" id="hsa:285016"/>
<dbReference type="MANE-Select" id="ENST00000403610.9">
    <property type="protein sequence ID" value="ENSP00000384604.3"/>
    <property type="RefSeq nucleotide sequence ID" value="NM_001002919.3"/>
    <property type="RefSeq protein sequence ID" value="NP_001002919.2"/>
</dbReference>
<dbReference type="UCSC" id="uc002qwi.5">
    <molecule id="Q6UX46-1"/>
    <property type="organism name" value="human"/>
</dbReference>
<dbReference type="AGR" id="HGNC:27683"/>
<dbReference type="CTD" id="285016"/>
<dbReference type="DisGeNET" id="285016"/>
<dbReference type="GeneCards" id="ALKAL2"/>
<dbReference type="HGNC" id="HGNC:27683">
    <property type="gene designation" value="ALKAL2"/>
</dbReference>
<dbReference type="HPA" id="ENSG00000189292">
    <property type="expression patterns" value="Tissue enhanced (adrenal)"/>
</dbReference>
<dbReference type="MIM" id="619671">
    <property type="type" value="gene"/>
</dbReference>
<dbReference type="neXtProt" id="NX_Q6UX46"/>
<dbReference type="OpenTargets" id="ENSG00000189292"/>
<dbReference type="PharmGKB" id="PA162386448"/>
<dbReference type="VEuPathDB" id="HostDB:ENSG00000189292"/>
<dbReference type="eggNOG" id="ENOG502S2JY">
    <property type="taxonomic scope" value="Eukaryota"/>
</dbReference>
<dbReference type="GeneTree" id="ENSGT00940000162505"/>
<dbReference type="HOGENOM" id="CLU_187798_0_0_1"/>
<dbReference type="InParanoid" id="Q6UX46"/>
<dbReference type="OMA" id="SPMCMER"/>
<dbReference type="OrthoDB" id="9807651at2759"/>
<dbReference type="PAN-GO" id="Q6UX46">
    <property type="GO annotations" value="4 GO annotations based on evolutionary models"/>
</dbReference>
<dbReference type="PhylomeDB" id="Q6UX46"/>
<dbReference type="TreeFam" id="TF333390"/>
<dbReference type="PathwayCommons" id="Q6UX46"/>
<dbReference type="Reactome" id="R-HSA-201556">
    <property type="pathway name" value="Signaling by ALK"/>
</dbReference>
<dbReference type="Reactome" id="R-HSA-9842663">
    <property type="pathway name" value="Signaling by LTK"/>
</dbReference>
<dbReference type="SignaLink" id="Q6UX46"/>
<dbReference type="BioGRID-ORCS" id="285016">
    <property type="hits" value="7 hits in 1135 CRISPR screens"/>
</dbReference>
<dbReference type="GenomeRNAi" id="285016"/>
<dbReference type="Pharos" id="Q6UX46">
    <property type="development level" value="Tbio"/>
</dbReference>
<dbReference type="PRO" id="PR:Q6UX46"/>
<dbReference type="Proteomes" id="UP000005640">
    <property type="component" value="Chromosome 2"/>
</dbReference>
<dbReference type="RNAct" id="Q6UX46">
    <property type="molecule type" value="protein"/>
</dbReference>
<dbReference type="Bgee" id="ENSG00000189292">
    <property type="expression patterns" value="Expressed in left adrenal gland cortex and 138 other cell types or tissues"/>
</dbReference>
<dbReference type="ExpressionAtlas" id="Q6UX46">
    <property type="expression patterns" value="baseline and differential"/>
</dbReference>
<dbReference type="GO" id="GO:0005576">
    <property type="term" value="C:extracellular region"/>
    <property type="evidence" value="ECO:0000314"/>
    <property type="project" value="UniProtKB"/>
</dbReference>
<dbReference type="GO" id="GO:0005615">
    <property type="term" value="C:extracellular space"/>
    <property type="evidence" value="ECO:0000314"/>
    <property type="project" value="UniProt"/>
</dbReference>
<dbReference type="GO" id="GO:0005886">
    <property type="term" value="C:plasma membrane"/>
    <property type="evidence" value="ECO:0007669"/>
    <property type="project" value="UniProtKB-SubCell"/>
</dbReference>
<dbReference type="GO" id="GO:0005125">
    <property type="term" value="F:cytokine activity"/>
    <property type="evidence" value="ECO:0000314"/>
    <property type="project" value="UniProtKB"/>
</dbReference>
<dbReference type="GO" id="GO:0030298">
    <property type="term" value="F:receptor signaling protein tyrosine kinase activator activity"/>
    <property type="evidence" value="ECO:0000314"/>
    <property type="project" value="UniProtKB"/>
</dbReference>
<dbReference type="GO" id="GO:0030971">
    <property type="term" value="F:receptor tyrosine kinase binding"/>
    <property type="evidence" value="ECO:0000314"/>
    <property type="project" value="UniProtKB"/>
</dbReference>
<dbReference type="GO" id="GO:0030297">
    <property type="term" value="F:transmembrane receptor protein tyrosine kinase activator activity"/>
    <property type="evidence" value="ECO:0000314"/>
    <property type="project" value="UniProt"/>
</dbReference>
<dbReference type="GO" id="GO:0007169">
    <property type="term" value="P:cell surface receptor protein tyrosine kinase signaling pathway"/>
    <property type="evidence" value="ECO:0000314"/>
    <property type="project" value="UniProt"/>
</dbReference>
<dbReference type="GO" id="GO:0070374">
    <property type="term" value="P:positive regulation of ERK1 and ERK2 cascade"/>
    <property type="evidence" value="ECO:0000314"/>
    <property type="project" value="UniProtKB"/>
</dbReference>
<dbReference type="GO" id="GO:0070378">
    <property type="term" value="P:positive regulation of ERK5 cascade"/>
    <property type="evidence" value="ECO:0000314"/>
    <property type="project" value="UniProtKB"/>
</dbReference>
<dbReference type="GO" id="GO:0010976">
    <property type="term" value="P:positive regulation of neuron projection development"/>
    <property type="evidence" value="ECO:0000314"/>
    <property type="project" value="UniProtKB"/>
</dbReference>
<dbReference type="InterPro" id="IPR029364">
    <property type="entry name" value="ALKL1/2"/>
</dbReference>
<dbReference type="PANTHER" id="PTHR28676:SF2">
    <property type="entry name" value="ALK AND LTK LIGAND 2"/>
    <property type="match status" value="1"/>
</dbReference>
<dbReference type="PANTHER" id="PTHR28676">
    <property type="entry name" value="ALK AND LTK LIGAND 2-RELATED"/>
    <property type="match status" value="1"/>
</dbReference>
<dbReference type="Pfam" id="PF15129">
    <property type="entry name" value="ALKL1_2"/>
    <property type="match status" value="1"/>
</dbReference>
<sequence length="152" mass="16915">MRGPGHPLLLGLLLVLGAAGRGRGGAEPREPADGQALLRLVVELVQELRKHHSAEHKGLQLLGRDCALGRAEAAGLGPSPEQRVEIVPRDLRMKDKFLKHLTGPLYFSPKCSKHFHRLYHNTRDCTIPAYYKRCARLLTRLAVSPVCMEDKQ</sequence>
<protein>
    <recommendedName>
        <fullName evidence="12">ALK and LTK ligand 2</fullName>
    </recommendedName>
    <alternativeName>
        <fullName evidence="11 12">Augmentor alpha</fullName>
        <shortName evidence="11 12">AUG-alpha</shortName>
    </alternativeName>
</protein>
<reference key="1">
    <citation type="journal article" date="2003" name="Genome Res.">
        <title>The secreted protein discovery initiative (SPDI), a large-scale effort to identify novel human secreted and transmembrane proteins: a bioinformatics assessment.</title>
        <authorList>
            <person name="Clark H.F."/>
            <person name="Gurney A.L."/>
            <person name="Abaya E."/>
            <person name="Baker K."/>
            <person name="Baldwin D.T."/>
            <person name="Brush J."/>
            <person name="Chen J."/>
            <person name="Chow B."/>
            <person name="Chui C."/>
            <person name="Crowley C."/>
            <person name="Currell B."/>
            <person name="Deuel B."/>
            <person name="Dowd P."/>
            <person name="Eaton D."/>
            <person name="Foster J.S."/>
            <person name="Grimaldi C."/>
            <person name="Gu Q."/>
            <person name="Hass P.E."/>
            <person name="Heldens S."/>
            <person name="Huang A."/>
            <person name="Kim H.S."/>
            <person name="Klimowski L."/>
            <person name="Jin Y."/>
            <person name="Johnson S."/>
            <person name="Lee J."/>
            <person name="Lewis L."/>
            <person name="Liao D."/>
            <person name="Mark M.R."/>
            <person name="Robbie E."/>
            <person name="Sanchez C."/>
            <person name="Schoenfeld J."/>
            <person name="Seshagiri S."/>
            <person name="Simmons L."/>
            <person name="Singh J."/>
            <person name="Smith V."/>
            <person name="Stinson J."/>
            <person name="Vagts A."/>
            <person name="Vandlen R.L."/>
            <person name="Watanabe C."/>
            <person name="Wieand D."/>
            <person name="Woods K."/>
            <person name="Xie M.-H."/>
            <person name="Yansura D.G."/>
            <person name="Yi S."/>
            <person name="Yu G."/>
            <person name="Yuan J."/>
            <person name="Zhang M."/>
            <person name="Zhang Z."/>
            <person name="Goddard A.D."/>
            <person name="Wood W.I."/>
            <person name="Godowski P.J."/>
            <person name="Gray A.M."/>
        </authorList>
    </citation>
    <scope>NUCLEOTIDE SEQUENCE [LARGE SCALE MRNA] (ISOFORM 2)</scope>
</reference>
<reference key="2">
    <citation type="journal article" date="2005" name="Nature">
        <title>Generation and annotation of the DNA sequences of human chromosomes 2 and 4.</title>
        <authorList>
            <person name="Hillier L.W."/>
            <person name="Graves T.A."/>
            <person name="Fulton R.S."/>
            <person name="Fulton L.A."/>
            <person name="Pepin K.H."/>
            <person name="Minx P."/>
            <person name="Wagner-McPherson C."/>
            <person name="Layman D."/>
            <person name="Wylie K."/>
            <person name="Sekhon M."/>
            <person name="Becker M.C."/>
            <person name="Fewell G.A."/>
            <person name="Delehaunty K.D."/>
            <person name="Miner T.L."/>
            <person name="Nash W.E."/>
            <person name="Kremitzki C."/>
            <person name="Oddy L."/>
            <person name="Du H."/>
            <person name="Sun H."/>
            <person name="Bradshaw-Cordum H."/>
            <person name="Ali J."/>
            <person name="Carter J."/>
            <person name="Cordes M."/>
            <person name="Harris A."/>
            <person name="Isak A."/>
            <person name="van Brunt A."/>
            <person name="Nguyen C."/>
            <person name="Du F."/>
            <person name="Courtney L."/>
            <person name="Kalicki J."/>
            <person name="Ozersky P."/>
            <person name="Abbott S."/>
            <person name="Armstrong J."/>
            <person name="Belter E.A."/>
            <person name="Caruso L."/>
            <person name="Cedroni M."/>
            <person name="Cotton M."/>
            <person name="Davidson T."/>
            <person name="Desai A."/>
            <person name="Elliott G."/>
            <person name="Erb T."/>
            <person name="Fronick C."/>
            <person name="Gaige T."/>
            <person name="Haakenson W."/>
            <person name="Haglund K."/>
            <person name="Holmes A."/>
            <person name="Harkins R."/>
            <person name="Kim K."/>
            <person name="Kruchowski S.S."/>
            <person name="Strong C.M."/>
            <person name="Grewal N."/>
            <person name="Goyea E."/>
            <person name="Hou S."/>
            <person name="Levy A."/>
            <person name="Martinka S."/>
            <person name="Mead K."/>
            <person name="McLellan M.D."/>
            <person name="Meyer R."/>
            <person name="Randall-Maher J."/>
            <person name="Tomlinson C."/>
            <person name="Dauphin-Kohlberg S."/>
            <person name="Kozlowicz-Reilly A."/>
            <person name="Shah N."/>
            <person name="Swearengen-Shahid S."/>
            <person name="Snider J."/>
            <person name="Strong J.T."/>
            <person name="Thompson J."/>
            <person name="Yoakum M."/>
            <person name="Leonard S."/>
            <person name="Pearman C."/>
            <person name="Trani L."/>
            <person name="Radionenko M."/>
            <person name="Waligorski J.E."/>
            <person name="Wang C."/>
            <person name="Rock S.M."/>
            <person name="Tin-Wollam A.-M."/>
            <person name="Maupin R."/>
            <person name="Latreille P."/>
            <person name="Wendl M.C."/>
            <person name="Yang S.-P."/>
            <person name="Pohl C."/>
            <person name="Wallis J.W."/>
            <person name="Spieth J."/>
            <person name="Bieri T.A."/>
            <person name="Berkowicz N."/>
            <person name="Nelson J.O."/>
            <person name="Osborne J."/>
            <person name="Ding L."/>
            <person name="Meyer R."/>
            <person name="Sabo A."/>
            <person name="Shotland Y."/>
            <person name="Sinha P."/>
            <person name="Wohldmann P.E."/>
            <person name="Cook L.L."/>
            <person name="Hickenbotham M.T."/>
            <person name="Eldred J."/>
            <person name="Williams D."/>
            <person name="Jones T.A."/>
            <person name="She X."/>
            <person name="Ciccarelli F.D."/>
            <person name="Izaurralde E."/>
            <person name="Taylor J."/>
            <person name="Schmutz J."/>
            <person name="Myers R.M."/>
            <person name="Cox D.R."/>
            <person name="Huang X."/>
            <person name="McPherson J.D."/>
            <person name="Mardis E.R."/>
            <person name="Clifton S.W."/>
            <person name="Warren W.C."/>
            <person name="Chinwalla A.T."/>
            <person name="Eddy S.R."/>
            <person name="Marra M.A."/>
            <person name="Ovcharenko I."/>
            <person name="Furey T.S."/>
            <person name="Miller W."/>
            <person name="Eichler E.E."/>
            <person name="Bork P."/>
            <person name="Suyama M."/>
            <person name="Torrents D."/>
            <person name="Waterston R.H."/>
            <person name="Wilson R.K."/>
        </authorList>
    </citation>
    <scope>NUCLEOTIDE SEQUENCE [LARGE SCALE GENOMIC DNA]</scope>
</reference>
<reference key="3">
    <citation type="journal article" date="2014" name="Proc. Natl. Acad. Sci. U.S.A.">
        <title>Deorphanization of the human leukocyte tyrosine kinase (LTK) receptor by a signaling screen of the extracellular proteome.</title>
        <authorList>
            <person name="Zhang H."/>
            <person name="Pao L.I."/>
            <person name="Zhou A."/>
            <person name="Brace A.D."/>
            <person name="Halenbeck R."/>
            <person name="Hsu A.W."/>
            <person name="Bray T.L."/>
            <person name="Hestir K."/>
            <person name="Bosch E."/>
            <person name="Lee E."/>
            <person name="Wang G."/>
            <person name="Liu H."/>
            <person name="Wong B.R."/>
            <person name="Kavanaugh W.M."/>
            <person name="Williams L.T."/>
        </authorList>
    </citation>
    <scope>TISSUE SPECIFICITY</scope>
</reference>
<reference key="4">
    <citation type="journal article" date="2015" name="Elife">
        <title>FAM150A and FAM150B are activating ligands for anaplastic lymphoma kinase.</title>
        <authorList>
            <person name="Guan J."/>
            <person name="Umapathy G."/>
            <person name="Yamazaki Y."/>
            <person name="Wolfstetter G."/>
            <person name="Mendoza P."/>
            <person name="Pfeifer K."/>
            <person name="Mohammed A."/>
            <person name="Hugosson F."/>
            <person name="Zhang H."/>
            <person name="Hsu A.W."/>
            <person name="Halenbeck R."/>
            <person name="Hallberg B."/>
            <person name="Palmer R.H."/>
        </authorList>
    </citation>
    <scope>FUNCTION</scope>
</reference>
<reference key="5">
    <citation type="journal article" date="2015" name="Proc. Natl. Acad. Sci. U.S.A.">
        <title>Augmentor alpha and beta (FAM150) are ligands of the receptor tyrosine kinases ALK and LTK: Hierarchy and specificity of ligand-receptor interactions.</title>
        <authorList>
            <person name="Reshetnyak A.V."/>
            <person name="Murray P.B."/>
            <person name="Shi X."/>
            <person name="Mo E.S."/>
            <person name="Mohanty J."/>
            <person name="Tome F."/>
            <person name="Bai H."/>
            <person name="Gunel M."/>
            <person name="Lax I."/>
            <person name="Schlessinger J."/>
        </authorList>
    </citation>
    <scope>FUNCTION</scope>
</reference>
<reference key="6">
    <citation type="journal article" date="2018" name="Proc. Natl. Acad. Sci. U.S.A.">
        <title>Identification of a biologically active fragment of ALK and LTK-Ligand 2 (augmentor-alpha).</title>
        <authorList>
            <person name="Reshetnyak A.V."/>
            <person name="Mohanty J."/>
            <person name="Tome F."/>
            <person name="Puleo D.E."/>
            <person name="Plotnikov A.N."/>
            <person name="Ahmed M."/>
            <person name="Kaur N."/>
            <person name="Poliakov A."/>
            <person name="Cinnaiyan A.M."/>
            <person name="Lax I."/>
            <person name="Schlessinger J."/>
        </authorList>
    </citation>
    <scope>PROTEIN SEQUENCE OF N-TERMINUS</scope>
    <scope>FUNCTION</scope>
    <scope>DISULFIDE BONDS</scope>
    <scope>SUBCELLULAR LOCATION</scope>
</reference>
<reference key="7">
    <citation type="journal article" date="2021" name="EMBO J.">
        <title>ALK ligand ALKAL2 potentiates MYCN-driven neuroblastoma in the absence of ALK mutation.</title>
        <authorList>
            <person name="Borenaes M."/>
            <person name="Umapathy G."/>
            <person name="Lai W.Y."/>
            <person name="Lind D.E."/>
            <person name="Witek B."/>
            <person name="Guan J."/>
            <person name="Mendoza-Garcia P."/>
            <person name="Masudi T."/>
            <person name="Claeys A."/>
            <person name="Chuang T.P."/>
            <person name="El Wakil A."/>
            <person name="Arefin B."/>
            <person name="Fransson S."/>
            <person name="Koster J."/>
            <person name="Johansson M."/>
            <person name="Gaarder J."/>
            <person name="Van den Eynden J."/>
            <person name="Hallberg B."/>
            <person name="Palmer R.H."/>
        </authorList>
    </citation>
    <scope>FUNCTION</scope>
</reference>
<reference key="8">
    <citation type="journal article" date="2021" name="Nature">
        <title>Structural basis of cytokine-mediated activation of ALK family receptors.</title>
        <authorList>
            <person name="De Munck S."/>
            <person name="Provost M."/>
            <person name="Kurikawa M."/>
            <person name="Omori I."/>
            <person name="Mukohyama J."/>
            <person name="Felix J."/>
            <person name="Bloch Y."/>
            <person name="Abdel-Wahab O."/>
            <person name="Bazan J.F."/>
            <person name="Yoshimi A."/>
            <person name="Savvides S.N."/>
        </authorList>
    </citation>
    <scope>STRUCTURE BY ELECTRON MICROSCOPY (4.17 ANGSTROMS) OF 78-182 IN COMPLEX WITH ALK</scope>
    <scope>FUNCTION</scope>
    <scope>DISULFIDE BONDS</scope>
    <scope>MUTAGENESIS OF PHE-97; HIS-100; ARG-123 AND ARG-136</scope>
</reference>
<reference key="9">
    <citation type="journal article" date="2021" name="Nature">
        <title>Mechanism for the activation of the anaplastic lymphoma kinase receptor.</title>
        <authorList>
            <person name="Reshetnyak A.V."/>
            <person name="Rossi P."/>
            <person name="Myasnikov A.G."/>
            <person name="Sowaileh M."/>
            <person name="Mohanty J."/>
            <person name="Nourse A."/>
            <person name="Miller D.J."/>
            <person name="Lax I."/>
            <person name="Schlessinger J."/>
            <person name="Kalodimos C.G."/>
        </authorList>
    </citation>
    <scope>STRUCTURE BY ELECTRON MICROSCOPY (2.27 ANGSTROMS) OF 25-152 IN COMPLEX WITH ALK</scope>
    <scope>STRUCTURE BY NMR OF 77-152</scope>
    <scope>FUNCTION</scope>
    <scope>SUBCELLULAR LOCATION</scope>
    <scope>DISULFIDE BONDS</scope>
    <scope>MUTAGENESIS OF CYS-66 AND 94-LYS--HIS-100</scope>
</reference>
<name>ALKL2_HUMAN</name>
<keyword id="KW-0002">3D-structure</keyword>
<keyword id="KW-0025">Alternative splicing</keyword>
<keyword id="KW-1003">Cell membrane</keyword>
<keyword id="KW-0202">Cytokine</keyword>
<keyword id="KW-0903">Direct protein sequencing</keyword>
<keyword id="KW-1015">Disulfide bond</keyword>
<keyword id="KW-0472">Membrane</keyword>
<keyword id="KW-1267">Proteomics identification</keyword>
<keyword id="KW-1185">Reference proteome</keyword>
<keyword id="KW-0964">Secreted</keyword>
<keyword id="KW-0732">Signal</keyword>
<comment type="function">
    <text evidence="3 4 5 6 7 8">Cytokine that acts as a physiological ligand for receptor tyrosine kinases LTK and ALK, leading to their activation (PubMed:26418745, PubMed:26630010, PubMed:30061385, PubMed:33411331, PubMed:34646012, PubMed:34819673). Cytokine-binding is sufficient to activate LTK (PubMed:34646012). In contrast, ALKAL2-driven activation of ALK is coupled with heparin-binding to ALK (PubMed:34646012). Stimulation of ALK signaling is involved in neural development and regulation of energy expenditure (PubMed:34646012, PubMed:34819673).</text>
</comment>
<comment type="subunit">
    <text evidence="5 8">Homodimer; interchain disulfide bond is not required for homodimerization.</text>
</comment>
<comment type="interaction">
    <interactant intactId="EBI-11691780">
        <id>Q6UX46</id>
    </interactant>
    <interactant intactId="EBI-357361">
        <id>Q9UM73</id>
        <label>ALK</label>
    </interactant>
    <organismsDiffer>false</organismsDiffer>
    <experiments>5</experiments>
</comment>
<comment type="subcellular location">
    <subcellularLocation>
        <location evidence="5">Secreted</location>
    </subcellularLocation>
    <subcellularLocation>
        <location evidence="8">Cell membrane</location>
    </subcellularLocation>
    <text evidence="8">Following interaction with receptor tyrosine kinase ALK, associates with the cell membrane, membrane-binding is required to activate ALK.</text>
</comment>
<comment type="alternative products">
    <event type="alternative splicing"/>
    <isoform>
        <id>Q6UX46-1</id>
        <name>1</name>
        <sequence type="displayed"/>
    </isoform>
    <isoform>
        <id>Q6UX46-2</id>
        <name>2</name>
        <sequence type="described" ref="VSP_037017 VSP_037018"/>
    </isoform>
</comment>
<comment type="tissue specificity">
    <text evidence="2">Widely expressed with highest levels in adrenal gland and modest levels in pancreas, testis and uterus.</text>
</comment>
<comment type="similarity">
    <text evidence="13">Belongs to the ALKAL family.</text>
</comment>
<comment type="caution">
    <text evidence="7 8">It is unclear whether it activates ALK as a homodimer or a monomer (PubMed:34646012, PubMed:34819673). According to a report, homodimeric ALKAL2 activates ALK (PubMed:34819673). According to a second publication, monomeric ALKAL2 binds and activates ALK (PubMed:34646012).</text>
</comment>
<feature type="signal peptide" evidence="1 5">
    <location>
        <begin position="1"/>
        <end position="24"/>
    </location>
</feature>
<feature type="chain" id="PRO_0000317193" description="ALK and LTK ligand 2">
    <location>
        <begin position="25"/>
        <end position="152"/>
    </location>
</feature>
<feature type="disulfide bond" description="Interchain" evidence="5 8">
    <location>
        <position position="66"/>
    </location>
</feature>
<feature type="disulfide bond" evidence="5 7 8 15 16">
    <location>
        <begin position="111"/>
        <end position="147"/>
    </location>
</feature>
<feature type="disulfide bond" evidence="5 7 8 15 16">
    <location>
        <begin position="125"/>
        <end position="134"/>
    </location>
</feature>
<feature type="splice variant" id="VSP_037017" description="In isoform 2." evidence="9">
    <location>
        <begin position="17"/>
        <end position="76"/>
    </location>
</feature>
<feature type="splice variant" id="VSP_037018" description="In isoform 2." evidence="9">
    <location>
        <position position="152"/>
    </location>
</feature>
<feature type="mutagenesis site" description="Abolished interchain disulfide bond without affecting homodimerization." evidence="8">
    <original>C</original>
    <variation>Y</variation>
    <location>
        <position position="66"/>
    </location>
</feature>
<feature type="mutagenesis site" description="Abolished association with the cell membrane, leading to impaired activation of receptor tyrosine kinase ALK." evidence="8">
    <original>KDKFLKH</original>
    <variation>EDEFLEE</variation>
    <location>
        <begin position="94"/>
        <end position="100"/>
    </location>
</feature>
<feature type="mutagenesis site" description="Slightly reduced affinity for receptor tyrosine kinase LTK." evidence="7">
    <original>F</original>
    <variation>E</variation>
    <location>
        <position position="97"/>
    </location>
</feature>
<feature type="mutagenesis site" description="Slightly reduced affinity for receptor tyrosine kinase LTK." evidence="7">
    <original>H</original>
    <variation>E</variation>
    <location>
        <position position="100"/>
    </location>
</feature>
<feature type="mutagenesis site" description="Reduced affinity for receptor tyrosine kinases ALK and LTK." evidence="7">
    <original>R</original>
    <variation>E</variation>
    <location>
        <position position="123"/>
    </location>
</feature>
<feature type="mutagenesis site" description="Reduced affinity for receptor tyrosine kinases ALK and LTK." evidence="7">
    <original>R</original>
    <variation>E</variation>
    <location>
        <position position="136"/>
    </location>
</feature>
<feature type="strand" evidence="17">
    <location>
        <begin position="81"/>
        <end position="83"/>
    </location>
</feature>
<feature type="helix" evidence="17">
    <location>
        <begin position="89"/>
        <end position="92"/>
    </location>
</feature>
<feature type="helix" evidence="18">
    <location>
        <begin position="96"/>
        <end position="102"/>
    </location>
</feature>
<feature type="helix" evidence="18">
    <location>
        <begin position="109"/>
        <end position="120"/>
    </location>
</feature>
<feature type="helix" evidence="18">
    <location>
        <begin position="123"/>
        <end position="126"/>
    </location>
</feature>
<feature type="helix" evidence="18">
    <location>
        <begin position="128"/>
        <end position="130"/>
    </location>
</feature>
<feature type="helix" evidence="18">
    <location>
        <begin position="131"/>
        <end position="143"/>
    </location>
</feature>
<feature type="helix" evidence="18">
    <location>
        <begin position="145"/>
        <end position="148"/>
    </location>
</feature>
<evidence type="ECO:0000255" key="1"/>
<evidence type="ECO:0000269" key="2">
    <source>
    </source>
</evidence>
<evidence type="ECO:0000269" key="3">
    <source>
    </source>
</evidence>
<evidence type="ECO:0000269" key="4">
    <source>
    </source>
</evidence>
<evidence type="ECO:0000269" key="5">
    <source>
    </source>
</evidence>
<evidence type="ECO:0000269" key="6">
    <source>
    </source>
</evidence>
<evidence type="ECO:0000269" key="7">
    <source>
    </source>
</evidence>
<evidence type="ECO:0000269" key="8">
    <source>
    </source>
</evidence>
<evidence type="ECO:0000303" key="9">
    <source>
    </source>
</evidence>
<evidence type="ECO:0000303" key="10">
    <source>
    </source>
</evidence>
<evidence type="ECO:0000303" key="11">
    <source>
    </source>
</evidence>
<evidence type="ECO:0000303" key="12">
    <source>
    </source>
</evidence>
<evidence type="ECO:0000305" key="13"/>
<evidence type="ECO:0000312" key="14">
    <source>
        <dbReference type="HGNC" id="HGNC:27683"/>
    </source>
</evidence>
<evidence type="ECO:0007744" key="15">
    <source>
        <dbReference type="PDB" id="7MZX"/>
    </source>
</evidence>
<evidence type="ECO:0007744" key="16">
    <source>
        <dbReference type="PDB" id="7NWZ"/>
    </source>
</evidence>
<evidence type="ECO:0007829" key="17">
    <source>
        <dbReference type="PDB" id="7MZX"/>
    </source>
</evidence>
<evidence type="ECO:0007829" key="18">
    <source>
        <dbReference type="PDB" id="7N00"/>
    </source>
</evidence>
<accession>Q6UX46</accession>
<accession>B5MC76</accession>
<gene>
    <name evidence="12 14" type="primary">ALKAL2</name>
    <name evidence="10" type="synonym">FAM150B</name>
    <name evidence="9" type="ORF">UNQ542/PRO1097</name>
</gene>